<comment type="function">
    <text evidence="2">GTPase involved in the biogenesis of the 60S ribosomal subunit and translational activation of ribosomes. Together with SBDS, triggers the GTP-dependent release of EIF6 from 60S pre-ribosomes in the cytoplasm, thereby activating ribosomes for translation competence by allowing 80S ribosome assembly and facilitating EIF6 recycling to the nucleus, where it is required for 60S rRNA processing and nuclear export.</text>
</comment>
<comment type="catalytic activity">
    <reaction evidence="2">
        <text>GTP + H2O = GDP + phosphate + H(+)</text>
        <dbReference type="Rhea" id="RHEA:19669"/>
        <dbReference type="ChEBI" id="CHEBI:15377"/>
        <dbReference type="ChEBI" id="CHEBI:15378"/>
        <dbReference type="ChEBI" id="CHEBI:37565"/>
        <dbReference type="ChEBI" id="CHEBI:43474"/>
        <dbReference type="ChEBI" id="CHEBI:58189"/>
    </reaction>
    <physiologicalReaction direction="left-to-right" evidence="2">
        <dbReference type="Rhea" id="RHEA:19670"/>
    </physiologicalReaction>
</comment>
<comment type="activity regulation">
    <text evidence="2">GTPase activity is stimulated in the presence of 60S ribosome subunits.</text>
</comment>
<comment type="subunit">
    <text evidence="2">Associates with the 60S ribosomal subunit. Found in a complex consisting of the 60S ribosomal subunit, SBDS and EFL1.</text>
</comment>
<comment type="similarity">
    <text evidence="3">Belongs to the TRAFAC class translation factor GTPase superfamily. Classic translation factor GTPase family.</text>
</comment>
<dbReference type="EC" id="3.6.5.-" evidence="2"/>
<dbReference type="EMBL" id="AK028676">
    <property type="protein sequence ID" value="BAC26061.1"/>
    <property type="molecule type" value="mRNA"/>
</dbReference>
<dbReference type="EMBL" id="AK031647">
    <property type="protein sequence ID" value="BAC27493.1"/>
    <property type="molecule type" value="mRNA"/>
</dbReference>
<dbReference type="EMBL" id="BC031852">
    <property type="protein sequence ID" value="AAH31852.1"/>
    <property type="molecule type" value="mRNA"/>
</dbReference>
<dbReference type="EMBL" id="BC045616">
    <property type="protein sequence ID" value="AAH45616.1"/>
    <property type="molecule type" value="mRNA"/>
</dbReference>
<dbReference type="CCDS" id="CCDS21410.1"/>
<dbReference type="RefSeq" id="NP_001153144.1">
    <property type="nucleotide sequence ID" value="NM_001159672.1"/>
</dbReference>
<dbReference type="RefSeq" id="NP_780526.2">
    <property type="nucleotide sequence ID" value="NM_175317.3"/>
</dbReference>
<dbReference type="SMR" id="Q8C0D5"/>
<dbReference type="BioGRID" id="221694">
    <property type="interactions" value="8"/>
</dbReference>
<dbReference type="FunCoup" id="Q8C0D5">
    <property type="interactions" value="2528"/>
</dbReference>
<dbReference type="STRING" id="10090.ENSMUSP00000046046"/>
<dbReference type="iPTMnet" id="Q8C0D5"/>
<dbReference type="PhosphoSitePlus" id="Q8C0D5"/>
<dbReference type="SwissPalm" id="Q8C0D5"/>
<dbReference type="PaxDb" id="10090-ENSMUSP00000046046"/>
<dbReference type="PeptideAtlas" id="Q8C0D5"/>
<dbReference type="ProteomicsDB" id="277553"/>
<dbReference type="Pumba" id="Q8C0D5"/>
<dbReference type="Antibodypedia" id="55408">
    <property type="antibodies" value="90 antibodies from 17 providers"/>
</dbReference>
<dbReference type="DNASU" id="101592"/>
<dbReference type="Ensembl" id="ENSMUST00000039881.4">
    <property type="protein sequence ID" value="ENSMUSP00000046046.4"/>
    <property type="gene ID" value="ENSMUSG00000038563.15"/>
</dbReference>
<dbReference type="Ensembl" id="ENSMUST00000179489.8">
    <property type="protein sequence ID" value="ENSMUSP00000137061.2"/>
    <property type="gene ID" value="ENSMUSG00000038563.15"/>
</dbReference>
<dbReference type="GeneID" id="101592"/>
<dbReference type="KEGG" id="mmu:101592"/>
<dbReference type="UCSC" id="uc009ide.2">
    <property type="organism name" value="mouse"/>
</dbReference>
<dbReference type="AGR" id="MGI:2141969"/>
<dbReference type="CTD" id="79631"/>
<dbReference type="MGI" id="MGI:2141969">
    <property type="gene designation" value="Efl1"/>
</dbReference>
<dbReference type="VEuPathDB" id="HostDB:ENSMUSG00000038563"/>
<dbReference type="eggNOG" id="KOG0467">
    <property type="taxonomic scope" value="Eukaryota"/>
</dbReference>
<dbReference type="GeneTree" id="ENSGT00550000074806"/>
<dbReference type="HOGENOM" id="CLU_002794_3_1_1"/>
<dbReference type="InParanoid" id="Q8C0D5"/>
<dbReference type="OMA" id="FARCDIQ"/>
<dbReference type="OrthoDB" id="364892at2759"/>
<dbReference type="PhylomeDB" id="Q8C0D5"/>
<dbReference type="TreeFam" id="TF105909"/>
<dbReference type="BioGRID-ORCS" id="101592">
    <property type="hits" value="23 hits in 77 CRISPR screens"/>
</dbReference>
<dbReference type="ChiTaRS" id="Efl1">
    <property type="organism name" value="mouse"/>
</dbReference>
<dbReference type="PRO" id="PR:Q8C0D5"/>
<dbReference type="Proteomes" id="UP000000589">
    <property type="component" value="Chromosome 7"/>
</dbReference>
<dbReference type="RNAct" id="Q8C0D5">
    <property type="molecule type" value="protein"/>
</dbReference>
<dbReference type="Bgee" id="ENSMUSG00000038563">
    <property type="expression patterns" value="Expressed in seminiferous tubule of testis and 218 other cell types or tissues"/>
</dbReference>
<dbReference type="ExpressionAtlas" id="Q8C0D5">
    <property type="expression patterns" value="baseline and differential"/>
</dbReference>
<dbReference type="GO" id="GO:0005525">
    <property type="term" value="F:GTP binding"/>
    <property type="evidence" value="ECO:0007669"/>
    <property type="project" value="UniProtKB-KW"/>
</dbReference>
<dbReference type="GO" id="GO:0003924">
    <property type="term" value="F:GTPase activity"/>
    <property type="evidence" value="ECO:0000250"/>
    <property type="project" value="UniProtKB"/>
</dbReference>
<dbReference type="GO" id="GO:0043022">
    <property type="term" value="F:ribosome binding"/>
    <property type="evidence" value="ECO:0000250"/>
    <property type="project" value="UniProtKB"/>
</dbReference>
<dbReference type="GO" id="GO:0003746">
    <property type="term" value="F:translation elongation factor activity"/>
    <property type="evidence" value="ECO:0007669"/>
    <property type="project" value="UniProtKB-KW"/>
</dbReference>
<dbReference type="GO" id="GO:0042256">
    <property type="term" value="P:cytosolic ribosome assembly"/>
    <property type="evidence" value="ECO:0000250"/>
    <property type="project" value="UniProtKB"/>
</dbReference>
<dbReference type="GO" id="GO:0046039">
    <property type="term" value="P:GTP metabolic process"/>
    <property type="evidence" value="ECO:0000250"/>
    <property type="project" value="UniProtKB"/>
</dbReference>
<dbReference type="CDD" id="cd01681">
    <property type="entry name" value="aeEF2_snRNP_like_IV"/>
    <property type="match status" value="1"/>
</dbReference>
<dbReference type="CDD" id="cd04096">
    <property type="entry name" value="eEF2_snRNP_like_C"/>
    <property type="match status" value="1"/>
</dbReference>
<dbReference type="CDD" id="cd01885">
    <property type="entry name" value="EF2"/>
    <property type="match status" value="1"/>
</dbReference>
<dbReference type="CDD" id="cd16268">
    <property type="entry name" value="EF2_II"/>
    <property type="match status" value="1"/>
</dbReference>
<dbReference type="CDD" id="cd16261">
    <property type="entry name" value="EF2_snRNP_III"/>
    <property type="match status" value="1"/>
</dbReference>
<dbReference type="FunFam" id="3.30.70.240:FF:000006">
    <property type="entry name" value="Elongation factor like GTPase 1"/>
    <property type="match status" value="1"/>
</dbReference>
<dbReference type="FunFam" id="3.40.50.300:FF:000732">
    <property type="entry name" value="Elongation factor like GTPase 1"/>
    <property type="match status" value="1"/>
</dbReference>
<dbReference type="FunFam" id="3.90.1430.10:FF:000002">
    <property type="entry name" value="Elongation factor like GTPase 1"/>
    <property type="match status" value="1"/>
</dbReference>
<dbReference type="FunFam" id="2.40.30.10:FF:000066">
    <property type="entry name" value="Elongation factor Tu GTP-binding domain-containing protein 1"/>
    <property type="match status" value="1"/>
</dbReference>
<dbReference type="FunFam" id="3.30.230.10:FF:000044">
    <property type="entry name" value="elongation factor-like GTPase 1 isoform X1"/>
    <property type="match status" value="1"/>
</dbReference>
<dbReference type="FunFam" id="3.30.70.870:FF:000002">
    <property type="entry name" value="Translation elongation factor 2"/>
    <property type="match status" value="1"/>
</dbReference>
<dbReference type="Gene3D" id="3.30.230.10">
    <property type="match status" value="1"/>
</dbReference>
<dbReference type="Gene3D" id="3.30.70.240">
    <property type="match status" value="1"/>
</dbReference>
<dbReference type="Gene3D" id="3.30.70.870">
    <property type="entry name" value="Elongation Factor G (Translational Gtpase), domain 3"/>
    <property type="match status" value="1"/>
</dbReference>
<dbReference type="Gene3D" id="3.40.50.300">
    <property type="entry name" value="P-loop containing nucleotide triphosphate hydrolases"/>
    <property type="match status" value="1"/>
</dbReference>
<dbReference type="Gene3D" id="2.40.30.10">
    <property type="entry name" value="Translation factors"/>
    <property type="match status" value="1"/>
</dbReference>
<dbReference type="Gene3D" id="3.90.1430.10">
    <property type="entry name" value="Yeast translation eEF2 (G' domain)"/>
    <property type="match status" value="1"/>
</dbReference>
<dbReference type="InterPro" id="IPR041095">
    <property type="entry name" value="EFG_II"/>
</dbReference>
<dbReference type="InterPro" id="IPR035647">
    <property type="entry name" value="EFG_III/V"/>
</dbReference>
<dbReference type="InterPro" id="IPR000640">
    <property type="entry name" value="EFG_V-like"/>
</dbReference>
<dbReference type="InterPro" id="IPR056752">
    <property type="entry name" value="EFL1"/>
</dbReference>
<dbReference type="InterPro" id="IPR027417">
    <property type="entry name" value="P-loop_NTPase"/>
</dbReference>
<dbReference type="InterPro" id="IPR020568">
    <property type="entry name" value="Ribosomal_Su5_D2-typ_SF"/>
</dbReference>
<dbReference type="InterPro" id="IPR014721">
    <property type="entry name" value="Ribsml_uS5_D2-typ_fold_subgr"/>
</dbReference>
<dbReference type="InterPro" id="IPR005225">
    <property type="entry name" value="Small_GTP-bd"/>
</dbReference>
<dbReference type="InterPro" id="IPR000795">
    <property type="entry name" value="T_Tr_GTP-bd_dom"/>
</dbReference>
<dbReference type="InterPro" id="IPR009000">
    <property type="entry name" value="Transl_B-barrel_sf"/>
</dbReference>
<dbReference type="NCBIfam" id="TIGR00231">
    <property type="entry name" value="small_GTP"/>
    <property type="match status" value="1"/>
</dbReference>
<dbReference type="PANTHER" id="PTHR42908:SF3">
    <property type="entry name" value="ELONGATION FACTOR-LIKE GTPASE 1"/>
    <property type="match status" value="1"/>
</dbReference>
<dbReference type="PANTHER" id="PTHR42908">
    <property type="entry name" value="TRANSLATION ELONGATION FACTOR-RELATED"/>
    <property type="match status" value="1"/>
</dbReference>
<dbReference type="Pfam" id="PF00679">
    <property type="entry name" value="EFG_C"/>
    <property type="match status" value="1"/>
</dbReference>
<dbReference type="Pfam" id="PF14492">
    <property type="entry name" value="EFG_III"/>
    <property type="match status" value="1"/>
</dbReference>
<dbReference type="Pfam" id="PF25118">
    <property type="entry name" value="EFL1"/>
    <property type="match status" value="1"/>
</dbReference>
<dbReference type="Pfam" id="PF00009">
    <property type="entry name" value="GTP_EFTU"/>
    <property type="match status" value="1"/>
</dbReference>
<dbReference type="PRINTS" id="PR00315">
    <property type="entry name" value="ELONGATNFCT"/>
</dbReference>
<dbReference type="SMART" id="SM00838">
    <property type="entry name" value="EFG_C"/>
    <property type="match status" value="1"/>
</dbReference>
<dbReference type="SUPFAM" id="SSF54980">
    <property type="entry name" value="EF-G C-terminal domain-like"/>
    <property type="match status" value="2"/>
</dbReference>
<dbReference type="SUPFAM" id="SSF52540">
    <property type="entry name" value="P-loop containing nucleoside triphosphate hydrolases"/>
    <property type="match status" value="1"/>
</dbReference>
<dbReference type="SUPFAM" id="SSF54211">
    <property type="entry name" value="Ribosomal protein S5 domain 2-like"/>
    <property type="match status" value="1"/>
</dbReference>
<dbReference type="SUPFAM" id="SSF50447">
    <property type="entry name" value="Translation proteins"/>
    <property type="match status" value="1"/>
</dbReference>
<dbReference type="PROSITE" id="PS51722">
    <property type="entry name" value="G_TR_2"/>
    <property type="match status" value="1"/>
</dbReference>
<accession>Q8C0D5</accession>
<accession>Q80W46</accession>
<accession>Q8C198</accession>
<accession>Q8K0B8</accession>
<gene>
    <name type="primary">Efl1</name>
    <name type="synonym">Eftud1</name>
</gene>
<feature type="chain" id="PRO_0000313806" description="Elongation factor-like GTPase 1">
    <location>
        <begin position="1"/>
        <end position="1127"/>
    </location>
</feature>
<feature type="domain" description="tr-type G" evidence="3">
    <location>
        <begin position="17"/>
        <end position="272"/>
    </location>
</feature>
<feature type="region of interest" description="Disordered" evidence="4">
    <location>
        <begin position="429"/>
        <end position="496"/>
    </location>
</feature>
<feature type="compositionally biased region" description="Basic and acidic residues" evidence="4">
    <location>
        <begin position="438"/>
        <end position="452"/>
    </location>
</feature>
<feature type="compositionally biased region" description="Basic and acidic residues" evidence="4">
    <location>
        <begin position="474"/>
        <end position="484"/>
    </location>
</feature>
<feature type="binding site" evidence="1">
    <location>
        <begin position="26"/>
        <end position="33"/>
    </location>
    <ligand>
        <name>GTP</name>
        <dbReference type="ChEBI" id="CHEBI:37565"/>
    </ligand>
</feature>
<feature type="binding site" evidence="1">
    <location>
        <begin position="92"/>
        <end position="96"/>
    </location>
    <ligand>
        <name>GTP</name>
        <dbReference type="ChEBI" id="CHEBI:37565"/>
    </ligand>
</feature>
<feature type="binding site" evidence="1">
    <location>
        <begin position="146"/>
        <end position="149"/>
    </location>
    <ligand>
        <name>GTP</name>
        <dbReference type="ChEBI" id="CHEBI:37565"/>
    </ligand>
</feature>
<feature type="modified residue" description="N6-acetyllysine" evidence="2">
    <location>
        <position position="528"/>
    </location>
</feature>
<feature type="sequence conflict" description="In Ref. 2; AAH45616." evidence="5" ref="2">
    <original>A</original>
    <variation>P</variation>
    <location>
        <position position="249"/>
    </location>
</feature>
<feature type="sequence conflict" description="In Ref. 1; BAC26061." evidence="5" ref="1">
    <original>K</original>
    <variation>N</variation>
    <location>
        <position position="452"/>
    </location>
</feature>
<proteinExistence type="evidence at protein level"/>
<organism>
    <name type="scientific">Mus musculus</name>
    <name type="common">Mouse</name>
    <dbReference type="NCBI Taxonomy" id="10090"/>
    <lineage>
        <taxon>Eukaryota</taxon>
        <taxon>Metazoa</taxon>
        <taxon>Chordata</taxon>
        <taxon>Craniata</taxon>
        <taxon>Vertebrata</taxon>
        <taxon>Euteleostomi</taxon>
        <taxon>Mammalia</taxon>
        <taxon>Eutheria</taxon>
        <taxon>Euarchontoglires</taxon>
        <taxon>Glires</taxon>
        <taxon>Rodentia</taxon>
        <taxon>Myomorpha</taxon>
        <taxon>Muroidea</taxon>
        <taxon>Muridae</taxon>
        <taxon>Murinae</taxon>
        <taxon>Mus</taxon>
        <taxon>Mus</taxon>
    </lineage>
</organism>
<reference key="1">
    <citation type="journal article" date="2005" name="Science">
        <title>The transcriptional landscape of the mammalian genome.</title>
        <authorList>
            <person name="Carninci P."/>
            <person name="Kasukawa T."/>
            <person name="Katayama S."/>
            <person name="Gough J."/>
            <person name="Frith M.C."/>
            <person name="Maeda N."/>
            <person name="Oyama R."/>
            <person name="Ravasi T."/>
            <person name="Lenhard B."/>
            <person name="Wells C."/>
            <person name="Kodzius R."/>
            <person name="Shimokawa K."/>
            <person name="Bajic V.B."/>
            <person name="Brenner S.E."/>
            <person name="Batalov S."/>
            <person name="Forrest A.R."/>
            <person name="Zavolan M."/>
            <person name="Davis M.J."/>
            <person name="Wilming L.G."/>
            <person name="Aidinis V."/>
            <person name="Allen J.E."/>
            <person name="Ambesi-Impiombato A."/>
            <person name="Apweiler R."/>
            <person name="Aturaliya R.N."/>
            <person name="Bailey T.L."/>
            <person name="Bansal M."/>
            <person name="Baxter L."/>
            <person name="Beisel K.W."/>
            <person name="Bersano T."/>
            <person name="Bono H."/>
            <person name="Chalk A.M."/>
            <person name="Chiu K.P."/>
            <person name="Choudhary V."/>
            <person name="Christoffels A."/>
            <person name="Clutterbuck D.R."/>
            <person name="Crowe M.L."/>
            <person name="Dalla E."/>
            <person name="Dalrymple B.P."/>
            <person name="de Bono B."/>
            <person name="Della Gatta G."/>
            <person name="di Bernardo D."/>
            <person name="Down T."/>
            <person name="Engstrom P."/>
            <person name="Fagiolini M."/>
            <person name="Faulkner G."/>
            <person name="Fletcher C.F."/>
            <person name="Fukushima T."/>
            <person name="Furuno M."/>
            <person name="Futaki S."/>
            <person name="Gariboldi M."/>
            <person name="Georgii-Hemming P."/>
            <person name="Gingeras T.R."/>
            <person name="Gojobori T."/>
            <person name="Green R.E."/>
            <person name="Gustincich S."/>
            <person name="Harbers M."/>
            <person name="Hayashi Y."/>
            <person name="Hensch T.K."/>
            <person name="Hirokawa N."/>
            <person name="Hill D."/>
            <person name="Huminiecki L."/>
            <person name="Iacono M."/>
            <person name="Ikeo K."/>
            <person name="Iwama A."/>
            <person name="Ishikawa T."/>
            <person name="Jakt M."/>
            <person name="Kanapin A."/>
            <person name="Katoh M."/>
            <person name="Kawasawa Y."/>
            <person name="Kelso J."/>
            <person name="Kitamura H."/>
            <person name="Kitano H."/>
            <person name="Kollias G."/>
            <person name="Krishnan S.P."/>
            <person name="Kruger A."/>
            <person name="Kummerfeld S.K."/>
            <person name="Kurochkin I.V."/>
            <person name="Lareau L.F."/>
            <person name="Lazarevic D."/>
            <person name="Lipovich L."/>
            <person name="Liu J."/>
            <person name="Liuni S."/>
            <person name="McWilliam S."/>
            <person name="Madan Babu M."/>
            <person name="Madera M."/>
            <person name="Marchionni L."/>
            <person name="Matsuda H."/>
            <person name="Matsuzawa S."/>
            <person name="Miki H."/>
            <person name="Mignone F."/>
            <person name="Miyake S."/>
            <person name="Morris K."/>
            <person name="Mottagui-Tabar S."/>
            <person name="Mulder N."/>
            <person name="Nakano N."/>
            <person name="Nakauchi H."/>
            <person name="Ng P."/>
            <person name="Nilsson R."/>
            <person name="Nishiguchi S."/>
            <person name="Nishikawa S."/>
            <person name="Nori F."/>
            <person name="Ohara O."/>
            <person name="Okazaki Y."/>
            <person name="Orlando V."/>
            <person name="Pang K.C."/>
            <person name="Pavan W.J."/>
            <person name="Pavesi G."/>
            <person name="Pesole G."/>
            <person name="Petrovsky N."/>
            <person name="Piazza S."/>
            <person name="Reed J."/>
            <person name="Reid J.F."/>
            <person name="Ring B.Z."/>
            <person name="Ringwald M."/>
            <person name="Rost B."/>
            <person name="Ruan Y."/>
            <person name="Salzberg S.L."/>
            <person name="Sandelin A."/>
            <person name="Schneider C."/>
            <person name="Schoenbach C."/>
            <person name="Sekiguchi K."/>
            <person name="Semple C.A."/>
            <person name="Seno S."/>
            <person name="Sessa L."/>
            <person name="Sheng Y."/>
            <person name="Shibata Y."/>
            <person name="Shimada H."/>
            <person name="Shimada K."/>
            <person name="Silva D."/>
            <person name="Sinclair B."/>
            <person name="Sperling S."/>
            <person name="Stupka E."/>
            <person name="Sugiura K."/>
            <person name="Sultana R."/>
            <person name="Takenaka Y."/>
            <person name="Taki K."/>
            <person name="Tammoja K."/>
            <person name="Tan S.L."/>
            <person name="Tang S."/>
            <person name="Taylor M.S."/>
            <person name="Tegner J."/>
            <person name="Teichmann S.A."/>
            <person name="Ueda H.R."/>
            <person name="van Nimwegen E."/>
            <person name="Verardo R."/>
            <person name="Wei C.L."/>
            <person name="Yagi K."/>
            <person name="Yamanishi H."/>
            <person name="Zabarovsky E."/>
            <person name="Zhu S."/>
            <person name="Zimmer A."/>
            <person name="Hide W."/>
            <person name="Bult C."/>
            <person name="Grimmond S.M."/>
            <person name="Teasdale R.D."/>
            <person name="Liu E.T."/>
            <person name="Brusic V."/>
            <person name="Quackenbush J."/>
            <person name="Wahlestedt C."/>
            <person name="Mattick J.S."/>
            <person name="Hume D.A."/>
            <person name="Kai C."/>
            <person name="Sasaki D."/>
            <person name="Tomaru Y."/>
            <person name="Fukuda S."/>
            <person name="Kanamori-Katayama M."/>
            <person name="Suzuki M."/>
            <person name="Aoki J."/>
            <person name="Arakawa T."/>
            <person name="Iida J."/>
            <person name="Imamura K."/>
            <person name="Itoh M."/>
            <person name="Kato T."/>
            <person name="Kawaji H."/>
            <person name="Kawagashira N."/>
            <person name="Kawashima T."/>
            <person name="Kojima M."/>
            <person name="Kondo S."/>
            <person name="Konno H."/>
            <person name="Nakano K."/>
            <person name="Ninomiya N."/>
            <person name="Nishio T."/>
            <person name="Okada M."/>
            <person name="Plessy C."/>
            <person name="Shibata K."/>
            <person name="Shiraki T."/>
            <person name="Suzuki S."/>
            <person name="Tagami M."/>
            <person name="Waki K."/>
            <person name="Watahiki A."/>
            <person name="Okamura-Oho Y."/>
            <person name="Suzuki H."/>
            <person name="Kawai J."/>
            <person name="Hayashizaki Y."/>
        </authorList>
    </citation>
    <scope>NUCLEOTIDE SEQUENCE [LARGE SCALE MRNA]</scope>
    <source>
        <strain>C57BL/6J</strain>
        <tissue>Skin</tissue>
        <tissue>Testis</tissue>
    </source>
</reference>
<reference key="2">
    <citation type="journal article" date="2004" name="Genome Res.">
        <title>The status, quality, and expansion of the NIH full-length cDNA project: the Mammalian Gene Collection (MGC).</title>
        <authorList>
            <consortium name="The MGC Project Team"/>
        </authorList>
    </citation>
    <scope>NUCLEOTIDE SEQUENCE [LARGE SCALE MRNA]</scope>
    <source>
        <strain>FVB/N</strain>
        <tissue>Colon</tissue>
        <tissue>Liver</tissue>
    </source>
</reference>
<reference key="3">
    <citation type="journal article" date="2010" name="Cell">
        <title>A tissue-specific atlas of mouse protein phosphorylation and expression.</title>
        <authorList>
            <person name="Huttlin E.L."/>
            <person name="Jedrychowski M.P."/>
            <person name="Elias J.E."/>
            <person name="Goswami T."/>
            <person name="Rad R."/>
            <person name="Beausoleil S.A."/>
            <person name="Villen J."/>
            <person name="Haas W."/>
            <person name="Sowa M.E."/>
            <person name="Gygi S.P."/>
        </authorList>
    </citation>
    <scope>IDENTIFICATION BY MASS SPECTROMETRY [LARGE SCALE ANALYSIS]</scope>
    <source>
        <tissue>Brain</tissue>
        <tissue>Brown adipose tissue</tissue>
        <tissue>Heart</tissue>
        <tissue>Kidney</tissue>
        <tissue>Liver</tissue>
        <tissue>Lung</tissue>
        <tissue>Pancreas</tissue>
        <tissue>Spleen</tissue>
        <tissue>Testis</tissue>
    </source>
</reference>
<protein>
    <recommendedName>
        <fullName>Elongation factor-like GTPase 1</fullName>
        <ecNumber evidence="2">3.6.5.-</ecNumber>
    </recommendedName>
    <alternativeName>
        <fullName>Elongation factor Tu GTP-binding domain-containing protein 1</fullName>
    </alternativeName>
    <alternativeName>
        <fullName>Elongation factor-like 1</fullName>
    </alternativeName>
    <alternativeName>
        <fullName>Protein FAM42A</fullName>
    </alternativeName>
</protein>
<evidence type="ECO:0000250" key="1"/>
<evidence type="ECO:0000250" key="2">
    <source>
        <dbReference type="UniProtKB" id="Q7Z2Z2"/>
    </source>
</evidence>
<evidence type="ECO:0000255" key="3">
    <source>
        <dbReference type="PROSITE-ProRule" id="PRU01059"/>
    </source>
</evidence>
<evidence type="ECO:0000256" key="4">
    <source>
        <dbReference type="SAM" id="MobiDB-lite"/>
    </source>
</evidence>
<evidence type="ECO:0000305" key="5"/>
<keyword id="KW-0007">Acetylation</keyword>
<keyword id="KW-0251">Elongation factor</keyword>
<keyword id="KW-0342">GTP-binding</keyword>
<keyword id="KW-0378">Hydrolase</keyword>
<keyword id="KW-0547">Nucleotide-binding</keyword>
<keyword id="KW-0648">Protein biosynthesis</keyword>
<keyword id="KW-1185">Reference proteome</keyword>
<keyword id="KW-0690">Ribosome biogenesis</keyword>
<sequence>MVLSGVDKMIRLQKNTANIRNICVLAHVDHGKTTLADCLISSNGIISSRLAGKLRYMDSREDEQVRGITMKSSAISLHYAEGHEEYLINLIDSPGHVDFSSEVSTAVRICDGCIIVVDAVEGVCPQTQAVLRQAWLENIRPVLVINKIDRLIVELKFTPQEAYSHLKNILEQINALTGTLFTSKVLEERAERETESQAKPHSEQGEQVYDWSAGLEDVDDSQLYFSPEQGNVVFTSAIDGWGFGIEHFARIYSQKIGIKKEVLLKTLWGDYYINMKAKKIMKVDQAKGKKPLFVQLILENIWSLYDAVLKKDKEKIDKIVTSLGLKIGAREARHSDPKVQINAICSQWLPISHAVLAMVCHKLPSPLDMTSERVEKLLCTGSQTFESLPPETQALKAAFMKCGSEDTAPVIIFVSKMFAVDVKALPQNKPRPLTQEEMAQRRERARQRHAEKLAAAQGQTSQGPTQDGGALETSPHEDEPRGDEPDVASVSRQPVSQEESSQEAFIAFARVFSGIARRGKKIFVLGPKYSPVDFLQRVPLGFSAPLEDLPPVPHMACCTLENLYLLMGRELEDLEEVPPGNVLGIGGLQDFVLKSATLCSLPSCPPFIPLNFEATPIVRVAVEPKHPSEMPQLVKGMKLLNQADPCVQVLIQETGEHVLVTAGEVHLQRCLDDLRERFAKIHISVSEPIIPFRETITKPPKVDMVNEEIGRQQKVAVIHQTKEEQSKIPEGIHVDSDGLITIPTPNKLATLSVRAIPLPEEVTRILEENSDLIRSMELLTSSLNEGRNTQAIHQKTQEKIWEFKGKLEKHLTGRKWRNTVDQIWSFGPRKCGPNILVSRSEDFQNSVWSGPAGRESKEASRFRDFGNSIVSGFQLATLSGPMCEEPLMGVCFVLEKWELNKCAEQGASDKQHQGQCDLAGEGQGGGKTCHVGDENQEQQDVCSEPFEETSQKGDSPVIDCYGPFSGQLIATMKEACRYALQVKPQRLMAAMYTCDIMATSDVLGRVYAVLSKREGRVLQEEMKEGTDMFIIKAVLPVAESFGFADEIRKRTSGLASPQLVFSHWEVIPSDPFWVPTTEEEYLHFGEKADSENQARKYMNAVRKRKGLYVEEKIVEHAEKQRTLSKNK</sequence>
<name>EFL1_MOUSE</name>